<feature type="chain" id="PRO_1000116772" description="Elongation factor Ts">
    <location>
        <begin position="1"/>
        <end position="218"/>
    </location>
</feature>
<feature type="region of interest" description="Involved in Mg(2+) ion dislocation from EF-Tu" evidence="1">
    <location>
        <begin position="82"/>
        <end position="85"/>
    </location>
</feature>
<comment type="function">
    <text evidence="1">Associates with the EF-Tu.GDP complex and induces the exchange of GDP to GTP. It remains bound to the aminoacyl-tRNA.EF-Tu.GTP complex up to the GTP hydrolysis stage on the ribosome.</text>
</comment>
<comment type="subcellular location">
    <subcellularLocation>
        <location evidence="1">Cytoplasm</location>
    </subcellularLocation>
</comment>
<comment type="similarity">
    <text evidence="1">Belongs to the EF-Ts family.</text>
</comment>
<proteinExistence type="inferred from homology"/>
<keyword id="KW-0963">Cytoplasm</keyword>
<keyword id="KW-0251">Elongation factor</keyword>
<keyword id="KW-0648">Protein biosynthesis</keyword>
<keyword id="KW-1185">Reference proteome</keyword>
<dbReference type="EMBL" id="CP000878">
    <property type="protein sequence ID" value="ABX08940.1"/>
    <property type="molecule type" value="Genomic_DNA"/>
</dbReference>
<dbReference type="RefSeq" id="WP_012195561.1">
    <property type="nucleotide sequence ID" value="NC_009976.1"/>
</dbReference>
<dbReference type="SMR" id="A9BAS8"/>
<dbReference type="STRING" id="93059.P9211_10091"/>
<dbReference type="KEGG" id="pmj:P9211_10091"/>
<dbReference type="eggNOG" id="COG0264">
    <property type="taxonomic scope" value="Bacteria"/>
</dbReference>
<dbReference type="HOGENOM" id="CLU_047155_1_1_3"/>
<dbReference type="OrthoDB" id="9808348at2"/>
<dbReference type="Proteomes" id="UP000000788">
    <property type="component" value="Chromosome"/>
</dbReference>
<dbReference type="GO" id="GO:0005737">
    <property type="term" value="C:cytoplasm"/>
    <property type="evidence" value="ECO:0007669"/>
    <property type="project" value="UniProtKB-SubCell"/>
</dbReference>
<dbReference type="GO" id="GO:0003746">
    <property type="term" value="F:translation elongation factor activity"/>
    <property type="evidence" value="ECO:0007669"/>
    <property type="project" value="UniProtKB-UniRule"/>
</dbReference>
<dbReference type="CDD" id="cd14275">
    <property type="entry name" value="UBA_EF-Ts"/>
    <property type="match status" value="1"/>
</dbReference>
<dbReference type="FunFam" id="1.10.286.20:FF:000001">
    <property type="entry name" value="Elongation factor Ts"/>
    <property type="match status" value="1"/>
</dbReference>
<dbReference type="FunFam" id="1.10.8.10:FF:000001">
    <property type="entry name" value="Elongation factor Ts"/>
    <property type="match status" value="1"/>
</dbReference>
<dbReference type="Gene3D" id="1.10.286.20">
    <property type="match status" value="1"/>
</dbReference>
<dbReference type="Gene3D" id="1.10.8.10">
    <property type="entry name" value="DNA helicase RuvA subunit, C-terminal domain"/>
    <property type="match status" value="1"/>
</dbReference>
<dbReference type="Gene3D" id="3.30.479.20">
    <property type="entry name" value="Elongation factor Ts, dimerisation domain"/>
    <property type="match status" value="1"/>
</dbReference>
<dbReference type="HAMAP" id="MF_00050">
    <property type="entry name" value="EF_Ts"/>
    <property type="match status" value="1"/>
</dbReference>
<dbReference type="InterPro" id="IPR036402">
    <property type="entry name" value="EF-Ts_dimer_sf"/>
</dbReference>
<dbReference type="InterPro" id="IPR001816">
    <property type="entry name" value="Transl_elong_EFTs/EF1B"/>
</dbReference>
<dbReference type="InterPro" id="IPR014039">
    <property type="entry name" value="Transl_elong_EFTs/EF1B_dimer"/>
</dbReference>
<dbReference type="InterPro" id="IPR018101">
    <property type="entry name" value="Transl_elong_Ts_CS"/>
</dbReference>
<dbReference type="InterPro" id="IPR009060">
    <property type="entry name" value="UBA-like_sf"/>
</dbReference>
<dbReference type="NCBIfam" id="TIGR00116">
    <property type="entry name" value="tsf"/>
    <property type="match status" value="1"/>
</dbReference>
<dbReference type="PANTHER" id="PTHR11741">
    <property type="entry name" value="ELONGATION FACTOR TS"/>
    <property type="match status" value="1"/>
</dbReference>
<dbReference type="PANTHER" id="PTHR11741:SF10">
    <property type="entry name" value="POLYPROTEIN OF EF-TS, CHLOROPLASTIC"/>
    <property type="match status" value="1"/>
</dbReference>
<dbReference type="Pfam" id="PF25025">
    <property type="entry name" value="EF-Ts_N"/>
    <property type="match status" value="1"/>
</dbReference>
<dbReference type="Pfam" id="PF00889">
    <property type="entry name" value="EF_TS"/>
    <property type="match status" value="1"/>
</dbReference>
<dbReference type="SUPFAM" id="SSF54713">
    <property type="entry name" value="Elongation factor Ts (EF-Ts), dimerisation domain"/>
    <property type="match status" value="1"/>
</dbReference>
<dbReference type="SUPFAM" id="SSF46934">
    <property type="entry name" value="UBA-like"/>
    <property type="match status" value="1"/>
</dbReference>
<dbReference type="PROSITE" id="PS01126">
    <property type="entry name" value="EF_TS_1"/>
    <property type="match status" value="1"/>
</dbReference>
<dbReference type="PROSITE" id="PS01127">
    <property type="entry name" value="EF_TS_2"/>
    <property type="match status" value="1"/>
</dbReference>
<reference key="1">
    <citation type="journal article" date="2007" name="PLoS Genet.">
        <title>Patterns and implications of gene gain and loss in the evolution of Prochlorococcus.</title>
        <authorList>
            <person name="Kettler G.C."/>
            <person name="Martiny A.C."/>
            <person name="Huang K."/>
            <person name="Zucker J."/>
            <person name="Coleman M.L."/>
            <person name="Rodrigue S."/>
            <person name="Chen F."/>
            <person name="Lapidus A."/>
            <person name="Ferriera S."/>
            <person name="Johnson J."/>
            <person name="Steglich C."/>
            <person name="Church G.M."/>
            <person name="Richardson P."/>
            <person name="Chisholm S.W."/>
        </authorList>
    </citation>
    <scope>NUCLEOTIDE SEQUENCE [LARGE SCALE GENOMIC DNA]</scope>
    <source>
        <strain>MIT 9211</strain>
    </source>
</reference>
<protein>
    <recommendedName>
        <fullName evidence="1">Elongation factor Ts</fullName>
        <shortName evidence="1">EF-Ts</shortName>
    </recommendedName>
</protein>
<evidence type="ECO:0000255" key="1">
    <source>
        <dbReference type="HAMAP-Rule" id="MF_00050"/>
    </source>
</evidence>
<name>EFTS_PROM4</name>
<accession>A9BAS8</accession>
<gene>
    <name evidence="1" type="primary">tsf</name>
    <name type="ordered locus">P9211_10091</name>
</gene>
<organism>
    <name type="scientific">Prochlorococcus marinus (strain MIT 9211)</name>
    <dbReference type="NCBI Taxonomy" id="93059"/>
    <lineage>
        <taxon>Bacteria</taxon>
        <taxon>Bacillati</taxon>
        <taxon>Cyanobacteriota</taxon>
        <taxon>Cyanophyceae</taxon>
        <taxon>Synechococcales</taxon>
        <taxon>Prochlorococcaceae</taxon>
        <taxon>Prochlorococcus</taxon>
    </lineage>
</organism>
<sequence>MPDITAKLVKELRDKTGAGMMDCKKALVESDADMEKAVEWLRQKGISSAEKKSGRVAAEGAIGSYIHTGSRVGVLLELNCETDFVARGELFQGLLRDISMQIAACPNVEFVAVDDIPVEVSDKEKSIEMGRDDLSGKPDQIKEKIVAGRISKRLKELALIEQPFIRDTSITVEQLVKQVAGQIGENLRIRRFTRYTLGEGIETDQSDFAAEVASISSK</sequence>